<sequence>MAMKKLLIASLLFSSATVYGAEGFVVKDIHFEGLQRVAVGAALLSMPVRTGDTVNDEDISNTIRALFATGNFEDVRVLRDGNTLLVQVKERPTIASITFSGNKSVKDDMLKQNLEASGVRVGESLDRTTLSDIEKGLEDFYYSVGKYSASVKAVVTPLPRNRVDLKLVFQEGVSAKIQQINIVGNHAFSTEELISHFQLRDEVPWWNVVGDRKYQKQKLAGDLETLRSYYLDRGYARFNIDSTQVSLTPDKKGIYITVNITEGDQYKLSGVQVSGNLAGHSAEIENLTKIEPGELYNGTKVTKMEDDIKKLLGRYGYAYPRVQSQPEINDADKTVKLRVNVDAGNRFYVRKIRFEGNDTSKDSVLRREMRQMEGAWLGSDLVDQGKERLNRLGFFETVDTDTQRVPGSLDQVDVVYKVKERNTGSFNFGIGYGTESGVSFQAGVQQDNWLGTGYSVGINGTKNDYQTYSELSVTNPYFTVDGVSLGGRIFYNDFEADDADLSDYTNKSYGTDVTLGFPINEYNTLRAGLGYVHNKLSNMQPQIAMDRYLESMGDPDASDFAADDFTFNYGWTYNKLDRGYFPTDGSRVNLTGKVTIPGSDNEYYKVSLDTATYVPIDNDHKWVVLGRTRWGYGDGLGGKEMPFYENFYAGGSSTVRGFQSNTIGPKAVYKNGAHTSWDDNDDYEDCTQESGCKSDDAVGGNAMAVASLEFITPTPFISEKYANSVRTSFFWDMGTVWDTNWDPSSAPSDVPDYSDPGNIRMSAGIALQWMSPLGPLVFSYAQPFKKYDGDKAEQFQFNIGKTW</sequence>
<feature type="signal peptide" evidence="1">
    <location>
        <begin position="1"/>
        <end position="20"/>
    </location>
</feature>
<feature type="chain" id="PRO_1000145783" description="Outer membrane protein assembly factor BamA">
    <location>
        <begin position="21"/>
        <end position="803"/>
    </location>
</feature>
<feature type="domain" description="POTRA 1" evidence="2">
    <location>
        <begin position="24"/>
        <end position="91"/>
    </location>
</feature>
<feature type="domain" description="POTRA 2" evidence="2">
    <location>
        <begin position="92"/>
        <end position="172"/>
    </location>
</feature>
<feature type="domain" description="POTRA 3" evidence="2">
    <location>
        <begin position="175"/>
        <end position="263"/>
    </location>
</feature>
<feature type="domain" description="POTRA 4" evidence="2">
    <location>
        <begin position="266"/>
        <end position="344"/>
    </location>
</feature>
<feature type="domain" description="POTRA 5" evidence="2">
    <location>
        <begin position="347"/>
        <end position="421"/>
    </location>
</feature>
<organism>
    <name type="scientific">Salmonella heidelberg (strain SL476)</name>
    <dbReference type="NCBI Taxonomy" id="454169"/>
    <lineage>
        <taxon>Bacteria</taxon>
        <taxon>Pseudomonadati</taxon>
        <taxon>Pseudomonadota</taxon>
        <taxon>Gammaproteobacteria</taxon>
        <taxon>Enterobacterales</taxon>
        <taxon>Enterobacteriaceae</taxon>
        <taxon>Salmonella</taxon>
    </lineage>
</organism>
<evidence type="ECO:0000255" key="1">
    <source>
        <dbReference type="HAMAP-Rule" id="MF_01430"/>
    </source>
</evidence>
<evidence type="ECO:0000255" key="2">
    <source>
        <dbReference type="PROSITE-ProRule" id="PRU01115"/>
    </source>
</evidence>
<keyword id="KW-0998">Cell outer membrane</keyword>
<keyword id="KW-0472">Membrane</keyword>
<keyword id="KW-0677">Repeat</keyword>
<keyword id="KW-0732">Signal</keyword>
<keyword id="KW-0812">Transmembrane</keyword>
<keyword id="KW-1134">Transmembrane beta strand</keyword>
<accession>B4TK52</accession>
<proteinExistence type="inferred from homology"/>
<comment type="function">
    <text evidence="1">Part of the outer membrane protein assembly complex, which is involved in assembly and insertion of beta-barrel proteins into the outer membrane. Constitutes, with BamD, the core component of the assembly machinery.</text>
</comment>
<comment type="subunit">
    <text evidence="1">Part of the Bam complex, which is composed of the outer membrane protein BamA, and four lipoproteins BamB, BamC, BamD and BamE.</text>
</comment>
<comment type="subcellular location">
    <subcellularLocation>
        <location evidence="1">Cell outer membrane</location>
    </subcellularLocation>
</comment>
<comment type="similarity">
    <text evidence="1">Belongs to the BamA family.</text>
</comment>
<name>BAMA_SALHS</name>
<gene>
    <name evidence="1" type="primary">bamA</name>
    <name type="synonym">yaeT</name>
    <name type="ordered locus">SeHA_C0262</name>
</gene>
<protein>
    <recommendedName>
        <fullName evidence="1">Outer membrane protein assembly factor BamA</fullName>
    </recommendedName>
</protein>
<reference key="1">
    <citation type="journal article" date="2011" name="J. Bacteriol.">
        <title>Comparative genomics of 28 Salmonella enterica isolates: evidence for CRISPR-mediated adaptive sublineage evolution.</title>
        <authorList>
            <person name="Fricke W.F."/>
            <person name="Mammel M.K."/>
            <person name="McDermott P.F."/>
            <person name="Tartera C."/>
            <person name="White D.G."/>
            <person name="Leclerc J.E."/>
            <person name="Ravel J."/>
            <person name="Cebula T.A."/>
        </authorList>
    </citation>
    <scope>NUCLEOTIDE SEQUENCE [LARGE SCALE GENOMIC DNA]</scope>
    <source>
        <strain>SL476</strain>
    </source>
</reference>
<dbReference type="EMBL" id="CP001120">
    <property type="protein sequence ID" value="ACF66187.1"/>
    <property type="molecule type" value="Genomic_DNA"/>
</dbReference>
<dbReference type="RefSeq" id="WP_001240932.1">
    <property type="nucleotide sequence ID" value="NC_011083.1"/>
</dbReference>
<dbReference type="SMR" id="B4TK52"/>
<dbReference type="KEGG" id="seh:SeHA_C0262"/>
<dbReference type="HOGENOM" id="CLU_007664_1_0_6"/>
<dbReference type="Proteomes" id="UP000001866">
    <property type="component" value="Chromosome"/>
</dbReference>
<dbReference type="GO" id="GO:1990063">
    <property type="term" value="C:Bam protein complex"/>
    <property type="evidence" value="ECO:0007669"/>
    <property type="project" value="TreeGrafter"/>
</dbReference>
<dbReference type="GO" id="GO:0043165">
    <property type="term" value="P:Gram-negative-bacterium-type cell outer membrane assembly"/>
    <property type="evidence" value="ECO:0007669"/>
    <property type="project" value="UniProtKB-UniRule"/>
</dbReference>
<dbReference type="GO" id="GO:0051205">
    <property type="term" value="P:protein insertion into membrane"/>
    <property type="evidence" value="ECO:0007669"/>
    <property type="project" value="UniProtKB-UniRule"/>
</dbReference>
<dbReference type="FunFam" id="2.40.160.50:FF:000001">
    <property type="entry name" value="Outer membrane protein assembly factor BamA"/>
    <property type="match status" value="1"/>
</dbReference>
<dbReference type="FunFam" id="3.10.20.310:FF:000001">
    <property type="entry name" value="Outer membrane protein assembly factor BamA"/>
    <property type="match status" value="1"/>
</dbReference>
<dbReference type="FunFam" id="3.10.20.310:FF:000002">
    <property type="entry name" value="Outer membrane protein assembly factor BamA"/>
    <property type="match status" value="1"/>
</dbReference>
<dbReference type="FunFam" id="3.10.20.310:FF:000003">
    <property type="entry name" value="Outer membrane protein assembly factor BamA"/>
    <property type="match status" value="1"/>
</dbReference>
<dbReference type="FunFam" id="3.10.20.310:FF:000004">
    <property type="entry name" value="Outer membrane protein assembly factor BamA"/>
    <property type="match status" value="1"/>
</dbReference>
<dbReference type="FunFam" id="3.10.20.310:FF:000005">
    <property type="entry name" value="Outer membrane protein assembly factor BamA"/>
    <property type="match status" value="1"/>
</dbReference>
<dbReference type="Gene3D" id="3.10.20.310">
    <property type="entry name" value="membrane protein fhac"/>
    <property type="match status" value="5"/>
</dbReference>
<dbReference type="Gene3D" id="2.40.160.50">
    <property type="entry name" value="membrane protein fhac: a member of the omp85/tpsb transporter family"/>
    <property type="match status" value="1"/>
</dbReference>
<dbReference type="HAMAP" id="MF_01430">
    <property type="entry name" value="OM_assembly_BamA"/>
    <property type="match status" value="1"/>
</dbReference>
<dbReference type="InterPro" id="IPR000184">
    <property type="entry name" value="Bac_surfAg_D15"/>
</dbReference>
<dbReference type="InterPro" id="IPR010827">
    <property type="entry name" value="BamA/TamA_POTRA"/>
</dbReference>
<dbReference type="InterPro" id="IPR039910">
    <property type="entry name" value="D15-like"/>
</dbReference>
<dbReference type="InterPro" id="IPR023707">
    <property type="entry name" value="OM_assembly_BamA"/>
</dbReference>
<dbReference type="InterPro" id="IPR034746">
    <property type="entry name" value="POTRA"/>
</dbReference>
<dbReference type="NCBIfam" id="TIGR03303">
    <property type="entry name" value="OM_YaeT"/>
    <property type="match status" value="1"/>
</dbReference>
<dbReference type="NCBIfam" id="NF008287">
    <property type="entry name" value="PRK11067.1"/>
    <property type="match status" value="1"/>
</dbReference>
<dbReference type="PANTHER" id="PTHR12815:SF23">
    <property type="entry name" value="OUTER MEMBRANE PROTEIN ASSEMBLY FACTOR BAMA"/>
    <property type="match status" value="1"/>
</dbReference>
<dbReference type="PANTHER" id="PTHR12815">
    <property type="entry name" value="SORTING AND ASSEMBLY MACHINERY SAMM50 PROTEIN FAMILY MEMBER"/>
    <property type="match status" value="1"/>
</dbReference>
<dbReference type="Pfam" id="PF01103">
    <property type="entry name" value="Omp85"/>
    <property type="match status" value="1"/>
</dbReference>
<dbReference type="Pfam" id="PF07244">
    <property type="entry name" value="POTRA"/>
    <property type="match status" value="4"/>
</dbReference>
<dbReference type="PIRSF" id="PIRSF006076">
    <property type="entry name" value="OM_assembly_OMP85"/>
    <property type="match status" value="1"/>
</dbReference>
<dbReference type="PROSITE" id="PS51779">
    <property type="entry name" value="POTRA"/>
    <property type="match status" value="5"/>
</dbReference>